<keyword id="KW-0997">Cell inner membrane</keyword>
<keyword id="KW-1003">Cell membrane</keyword>
<keyword id="KW-0406">Ion transport</keyword>
<keyword id="KW-0408">Iron</keyword>
<keyword id="KW-0472">Membrane</keyword>
<keyword id="KW-0479">Metal-binding</keyword>
<keyword id="KW-0812">Transmembrane</keyword>
<keyword id="KW-1133">Transmembrane helix</keyword>
<keyword id="KW-0813">Transport</keyword>
<keyword id="KW-0862">Zinc</keyword>
<keyword id="KW-0864">Zinc transport</keyword>
<dbReference type="EMBL" id="CP000946">
    <property type="protein sequence ID" value="ACA76334.1"/>
    <property type="molecule type" value="Genomic_DNA"/>
</dbReference>
<dbReference type="RefSeq" id="WP_001295627.1">
    <property type="nucleotide sequence ID" value="NZ_MTFT01000027.1"/>
</dbReference>
<dbReference type="SMR" id="B1ISB7"/>
<dbReference type="GeneID" id="93778954"/>
<dbReference type="KEGG" id="ecl:EcolC_0658"/>
<dbReference type="HOGENOM" id="CLU_015114_1_3_6"/>
<dbReference type="GO" id="GO:0005886">
    <property type="term" value="C:plasma membrane"/>
    <property type="evidence" value="ECO:0007669"/>
    <property type="project" value="UniProtKB-SubCell"/>
</dbReference>
<dbReference type="GO" id="GO:0046872">
    <property type="term" value="F:metal ion binding"/>
    <property type="evidence" value="ECO:0007669"/>
    <property type="project" value="UniProtKB-KW"/>
</dbReference>
<dbReference type="GO" id="GO:0005385">
    <property type="term" value="F:zinc ion transmembrane transporter activity"/>
    <property type="evidence" value="ECO:0007669"/>
    <property type="project" value="UniProtKB-UniRule"/>
</dbReference>
<dbReference type="HAMAP" id="MF_00548">
    <property type="entry name" value="ZupT"/>
    <property type="match status" value="1"/>
</dbReference>
<dbReference type="InterPro" id="IPR003689">
    <property type="entry name" value="ZIP"/>
</dbReference>
<dbReference type="InterPro" id="IPR023498">
    <property type="entry name" value="Zn_transptr_ZupT"/>
</dbReference>
<dbReference type="NCBIfam" id="NF003243">
    <property type="entry name" value="PRK04201.1"/>
    <property type="match status" value="1"/>
</dbReference>
<dbReference type="PANTHER" id="PTHR11040:SF205">
    <property type="entry name" value="ZINC TRANSPORTER ZUPT"/>
    <property type="match status" value="1"/>
</dbReference>
<dbReference type="PANTHER" id="PTHR11040">
    <property type="entry name" value="ZINC/IRON TRANSPORTER"/>
    <property type="match status" value="1"/>
</dbReference>
<dbReference type="Pfam" id="PF02535">
    <property type="entry name" value="Zip"/>
    <property type="match status" value="2"/>
</dbReference>
<accession>B1ISB7</accession>
<sequence length="257" mass="26485">MSVPLILTILAGAATFIGAFLGVLGQKPSNRLLAFSLGFAAGIMLLISLMEMLPAALAAEGMSPVLGYGMFIFGLLGYFGLDRMLPHAHPQDLMQKSVQPLPKSIKRTAILLTLGISLHNFPEGIATFVTASSNLELGFGIALAVALHNIPEGLAVAGPVYAATGSKRTAILWAGISGLAEILGGVLAWLILGSMISPVVMAAIMAAVAGIMVALSVDELMPLAKEIDPNNNPSYGVLCGMSVMGFSLVLLQTAGIG</sequence>
<organism>
    <name type="scientific">Escherichia coli (strain ATCC 8739 / DSM 1576 / NBRC 3972 / NCIMB 8545 / WDCM 00012 / Crooks)</name>
    <dbReference type="NCBI Taxonomy" id="481805"/>
    <lineage>
        <taxon>Bacteria</taxon>
        <taxon>Pseudomonadati</taxon>
        <taxon>Pseudomonadota</taxon>
        <taxon>Gammaproteobacteria</taxon>
        <taxon>Enterobacterales</taxon>
        <taxon>Enterobacteriaceae</taxon>
        <taxon>Escherichia</taxon>
    </lineage>
</organism>
<evidence type="ECO:0000255" key="1">
    <source>
        <dbReference type="HAMAP-Rule" id="MF_00548"/>
    </source>
</evidence>
<comment type="function">
    <text evidence="1">Mediates zinc uptake. May also transport other divalent cations.</text>
</comment>
<comment type="catalytic activity">
    <reaction evidence="1">
        <text>Zn(2+)(in) = Zn(2+)(out)</text>
        <dbReference type="Rhea" id="RHEA:29351"/>
        <dbReference type="ChEBI" id="CHEBI:29105"/>
    </reaction>
</comment>
<comment type="subcellular location">
    <subcellularLocation>
        <location evidence="1">Cell inner membrane</location>
        <topology evidence="1">Multi-pass membrane protein</topology>
    </subcellularLocation>
</comment>
<comment type="similarity">
    <text evidence="1">Belongs to the ZIP transporter (TC 2.A.5) family. ZupT subfamily.</text>
</comment>
<protein>
    <recommendedName>
        <fullName evidence="1">Zinc transporter ZupT</fullName>
    </recommendedName>
</protein>
<reference key="1">
    <citation type="submission" date="2008-02" db="EMBL/GenBank/DDBJ databases">
        <title>Complete sequence of Escherichia coli C str. ATCC 8739.</title>
        <authorList>
            <person name="Copeland A."/>
            <person name="Lucas S."/>
            <person name="Lapidus A."/>
            <person name="Glavina del Rio T."/>
            <person name="Dalin E."/>
            <person name="Tice H."/>
            <person name="Bruce D."/>
            <person name="Goodwin L."/>
            <person name="Pitluck S."/>
            <person name="Kiss H."/>
            <person name="Brettin T."/>
            <person name="Detter J.C."/>
            <person name="Han C."/>
            <person name="Kuske C.R."/>
            <person name="Schmutz J."/>
            <person name="Larimer F."/>
            <person name="Land M."/>
            <person name="Hauser L."/>
            <person name="Kyrpides N."/>
            <person name="Mikhailova N."/>
            <person name="Ingram L."/>
            <person name="Richardson P."/>
        </authorList>
    </citation>
    <scope>NUCLEOTIDE SEQUENCE [LARGE SCALE GENOMIC DNA]</scope>
    <source>
        <strain>ATCC 8739 / DSM 1576 / NBRC 3972 / NCIMB 8545 / WDCM 00012 / Crooks</strain>
    </source>
</reference>
<proteinExistence type="inferred from homology"/>
<feature type="chain" id="PRO_1000081946" description="Zinc transporter ZupT">
    <location>
        <begin position="1"/>
        <end position="257"/>
    </location>
</feature>
<feature type="transmembrane region" description="Helical" evidence="1">
    <location>
        <begin position="5"/>
        <end position="25"/>
    </location>
</feature>
<feature type="transmembrane region" description="Helical" evidence="1">
    <location>
        <begin position="32"/>
        <end position="52"/>
    </location>
</feature>
<feature type="transmembrane region" description="Helical" evidence="1">
    <location>
        <begin position="61"/>
        <end position="81"/>
    </location>
</feature>
<feature type="transmembrane region" description="Helical" evidence="1">
    <location>
        <begin position="137"/>
        <end position="157"/>
    </location>
</feature>
<feature type="transmembrane region" description="Helical" evidence="1">
    <location>
        <begin position="171"/>
        <end position="191"/>
    </location>
</feature>
<feature type="transmembrane region" description="Helical" evidence="1">
    <location>
        <begin position="195"/>
        <end position="215"/>
    </location>
</feature>
<feature type="transmembrane region" description="Helical" evidence="1">
    <location>
        <begin position="236"/>
        <end position="256"/>
    </location>
</feature>
<feature type="binding site" description="M2 metal binding site" evidence="1">
    <location>
        <position position="120"/>
    </location>
    <ligand>
        <name>Fe(2+)</name>
        <dbReference type="ChEBI" id="CHEBI:29033"/>
    </ligand>
</feature>
<feature type="binding site" description="M2 metal binding site" evidence="1">
    <location>
        <position position="123"/>
    </location>
    <ligand>
        <name>Fe(2+)</name>
        <dbReference type="ChEBI" id="CHEBI:29033"/>
    </ligand>
</feature>
<feature type="binding site" description="M1 metal binding site" evidence="1">
    <location>
        <position position="123"/>
    </location>
    <ligand>
        <name>Zn(2+)</name>
        <dbReference type="ChEBI" id="CHEBI:29105"/>
    </ligand>
</feature>
<feature type="binding site" description="M1 metal binding site" evidence="1">
    <location>
        <position position="148"/>
    </location>
    <ligand>
        <name>Zn(2+)</name>
        <dbReference type="ChEBI" id="CHEBI:29105"/>
    </ligand>
</feature>
<feature type="binding site" description="M2 metal binding site" evidence="1">
    <location>
        <position position="149"/>
    </location>
    <ligand>
        <name>Fe(2+)</name>
        <dbReference type="ChEBI" id="CHEBI:29033"/>
    </ligand>
</feature>
<feature type="binding site" description="M2 metal binding site" evidence="1">
    <location>
        <position position="152"/>
    </location>
    <ligand>
        <name>Fe(2+)</name>
        <dbReference type="ChEBI" id="CHEBI:29033"/>
    </ligand>
</feature>
<feature type="binding site" description="M1 metal binding site" evidence="1">
    <location>
        <position position="152"/>
    </location>
    <ligand>
        <name>Zn(2+)</name>
        <dbReference type="ChEBI" id="CHEBI:29105"/>
    </ligand>
</feature>
<feature type="binding site" description="M2 metal binding site" evidence="1">
    <location>
        <position position="181"/>
    </location>
    <ligand>
        <name>Fe(2+)</name>
        <dbReference type="ChEBI" id="CHEBI:29033"/>
    </ligand>
</feature>
<gene>
    <name evidence="1" type="primary">zupT</name>
    <name type="ordered locus">EcolC_0658</name>
</gene>
<name>ZUPT_ECOLC</name>